<feature type="chain" id="PRO_0000219756" description="Photosystem II reaction center protein L">
    <location>
        <begin position="1"/>
        <end position="38"/>
    </location>
</feature>
<feature type="transmembrane region" description="Helical" evidence="1">
    <location>
        <begin position="17"/>
        <end position="37"/>
    </location>
</feature>
<feature type="helix" evidence="2">
    <location>
        <begin position="15"/>
        <end position="37"/>
    </location>
</feature>
<evidence type="ECO:0000255" key="1">
    <source>
        <dbReference type="HAMAP-Rule" id="MF_01317"/>
    </source>
</evidence>
<evidence type="ECO:0007829" key="2">
    <source>
        <dbReference type="PDB" id="5XNL"/>
    </source>
</evidence>
<geneLocation type="chloroplast"/>
<proteinExistence type="evidence at protein level"/>
<dbReference type="EMBL" id="X15767">
    <property type="protein sequence ID" value="CAA33774.1"/>
    <property type="molecule type" value="Genomic_DNA"/>
</dbReference>
<dbReference type="EMBL" id="AY007482">
    <property type="protein sequence ID" value="AAG27012.1"/>
    <property type="molecule type" value="Genomic_DNA"/>
</dbReference>
<dbReference type="PIR" id="C48310">
    <property type="entry name" value="C48310"/>
</dbReference>
<dbReference type="RefSeq" id="YP_003587553.1">
    <property type="nucleotide sequence ID" value="NC_014057.1"/>
</dbReference>
<dbReference type="PDB" id="5XNL">
    <property type="method" value="EM"/>
    <property type="resolution" value="2.70 A"/>
    <property type="chains" value="L/l=1-38"/>
</dbReference>
<dbReference type="PDB" id="5XNM">
    <property type="method" value="EM"/>
    <property type="resolution" value="3.20 A"/>
    <property type="chains" value="L/l=1-38"/>
</dbReference>
<dbReference type="PDB" id="6YP7">
    <property type="method" value="EM"/>
    <property type="resolution" value="3.80 A"/>
    <property type="chains" value="L/l=2-38"/>
</dbReference>
<dbReference type="PDBsum" id="5XNL"/>
<dbReference type="PDBsum" id="5XNM"/>
<dbReference type="PDBsum" id="6YP7"/>
<dbReference type="EMDB" id="EMD-10865"/>
<dbReference type="EMDB" id="EMD-6741"/>
<dbReference type="EMDB" id="EMD-6742"/>
<dbReference type="SMR" id="P60147"/>
<dbReference type="GeneID" id="9073101"/>
<dbReference type="GO" id="GO:0009535">
    <property type="term" value="C:chloroplast thylakoid membrane"/>
    <property type="evidence" value="ECO:0007669"/>
    <property type="project" value="UniProtKB-SubCell"/>
</dbReference>
<dbReference type="GO" id="GO:0009539">
    <property type="term" value="C:photosystem II reaction center"/>
    <property type="evidence" value="ECO:0007669"/>
    <property type="project" value="InterPro"/>
</dbReference>
<dbReference type="GO" id="GO:0015979">
    <property type="term" value="P:photosynthesis"/>
    <property type="evidence" value="ECO:0007669"/>
    <property type="project" value="UniProtKB-UniRule"/>
</dbReference>
<dbReference type="HAMAP" id="MF_01317">
    <property type="entry name" value="PSII_PsbL"/>
    <property type="match status" value="1"/>
</dbReference>
<dbReference type="InterPro" id="IPR003372">
    <property type="entry name" value="PSII_PsbL"/>
</dbReference>
<dbReference type="InterPro" id="IPR037266">
    <property type="entry name" value="PSII_PsbL_sf"/>
</dbReference>
<dbReference type="NCBIfam" id="NF001972">
    <property type="entry name" value="PRK00753.1"/>
    <property type="match status" value="1"/>
</dbReference>
<dbReference type="Pfam" id="PF02419">
    <property type="entry name" value="PsbL"/>
    <property type="match status" value="1"/>
</dbReference>
<dbReference type="SUPFAM" id="SSF161017">
    <property type="entry name" value="Photosystem II reaction center protein L, PsbL"/>
    <property type="match status" value="1"/>
</dbReference>
<keyword id="KW-0002">3D-structure</keyword>
<keyword id="KW-0150">Chloroplast</keyword>
<keyword id="KW-0472">Membrane</keyword>
<keyword id="KW-0602">Photosynthesis</keyword>
<keyword id="KW-0604">Photosystem II</keyword>
<keyword id="KW-0934">Plastid</keyword>
<keyword id="KW-0674">Reaction center</keyword>
<keyword id="KW-0793">Thylakoid</keyword>
<keyword id="KW-0812">Transmembrane</keyword>
<keyword id="KW-1133">Transmembrane helix</keyword>
<sequence length="38" mass="4497">MTQSNPNEQNVELNRTSLYWGLLLIFVLAVLFSNYFFN</sequence>
<protein>
    <recommendedName>
        <fullName evidence="1">Photosystem II reaction center protein L</fullName>
        <shortName evidence="1">PSII-L</shortName>
    </recommendedName>
</protein>
<gene>
    <name evidence="1" type="primary">psbL</name>
</gene>
<accession>P60147</accession>
<accession>O47030</accession>
<accession>P12166</accession>
<accession>P12167</accession>
<accession>Q34007</accession>
<organism>
    <name type="scientific">Pisum sativum</name>
    <name type="common">Garden pea</name>
    <name type="synonym">Lathyrus oleraceus</name>
    <dbReference type="NCBI Taxonomy" id="3888"/>
    <lineage>
        <taxon>Eukaryota</taxon>
        <taxon>Viridiplantae</taxon>
        <taxon>Streptophyta</taxon>
        <taxon>Embryophyta</taxon>
        <taxon>Tracheophyta</taxon>
        <taxon>Spermatophyta</taxon>
        <taxon>Magnoliopsida</taxon>
        <taxon>eudicotyledons</taxon>
        <taxon>Gunneridae</taxon>
        <taxon>Pentapetalae</taxon>
        <taxon>rosids</taxon>
        <taxon>fabids</taxon>
        <taxon>Fabales</taxon>
        <taxon>Fabaceae</taxon>
        <taxon>Papilionoideae</taxon>
        <taxon>50 kb inversion clade</taxon>
        <taxon>NPAAA clade</taxon>
        <taxon>Hologalegina</taxon>
        <taxon>IRL clade</taxon>
        <taxon>Fabeae</taxon>
        <taxon>Pisum</taxon>
    </lineage>
</organism>
<comment type="function">
    <text evidence="1">One of the components of the core complex of photosystem II (PSII). PSII is a light-driven water:plastoquinone oxidoreductase that uses light energy to abstract electrons from H(2)O, generating O(2) and a proton gradient subsequently used for ATP formation. It consists of a core antenna complex that captures photons, and an electron transfer chain that converts photonic excitation into a charge separation. This subunit is found at the monomer-monomer interface and is required for correct PSII assembly and/or dimerization.</text>
</comment>
<comment type="subunit">
    <text evidence="1">PSII is composed of 1 copy each of membrane proteins PsbA, PsbB, PsbC, PsbD, PsbE, PsbF, PsbH, PsbI, PsbJ, PsbK, PsbL, PsbM, PsbT, PsbX, PsbY, PsbZ, Psb30/Ycf12, at least 3 peripheral proteins of the oxygen-evolving complex and a large number of cofactors. It forms dimeric complexes.</text>
</comment>
<comment type="subcellular location">
    <subcellularLocation>
        <location evidence="1">Plastid</location>
        <location evidence="1">Chloroplast thylakoid membrane</location>
        <topology evidence="1">Single-pass membrane protein</topology>
    </subcellularLocation>
</comment>
<comment type="similarity">
    <text evidence="1">Belongs to the PsbL family.</text>
</comment>
<reference key="1">
    <citation type="journal article" date="1989" name="Curr. Genet.">
        <title>Two small open reading frames are co-transcribed with the pea chloroplast genes for the polypeptides of cytochrome b-559.</title>
        <authorList>
            <person name="Willey D.L."/>
            <person name="Gray J.C."/>
        </authorList>
    </citation>
    <scope>NUCLEOTIDE SEQUENCE [GENOMIC DNA]</scope>
</reference>
<reference key="2">
    <citation type="submission" date="2000-02" db="EMBL/GenBank/DDBJ databases">
        <title>Long branches in the seed plants and the root of the angiosperms.</title>
        <authorList>
            <person name="Graham S.W."/>
            <person name="Reeves P.A."/>
            <person name="Burns A."/>
            <person name="Olmstead R.G."/>
        </authorList>
    </citation>
    <scope>NUCLEOTIDE SEQUENCE [GENOMIC DNA]</scope>
</reference>
<name>PSBL_PEA</name>